<proteinExistence type="evidence at protein level"/>
<feature type="chain" id="PRO_0000064576" description="Arylmalonate decarboxylase">
    <location>
        <begin position="1"/>
        <end position="240"/>
    </location>
</feature>
<feature type="strand" evidence="2">
    <location>
        <begin position="8"/>
        <end position="15"/>
    </location>
</feature>
<feature type="helix" evidence="2">
    <location>
        <begin position="23"/>
        <end position="27"/>
    </location>
</feature>
<feature type="strand" evidence="2">
    <location>
        <begin position="33"/>
        <end position="37"/>
    </location>
</feature>
<feature type="helix" evidence="1">
    <location>
        <begin position="39"/>
        <end position="41"/>
    </location>
</feature>
<feature type="helix" evidence="2">
    <location>
        <begin position="45"/>
        <end position="51"/>
    </location>
</feature>
<feature type="helix" evidence="2">
    <location>
        <begin position="52"/>
        <end position="54"/>
    </location>
</feature>
<feature type="helix" evidence="2">
    <location>
        <begin position="55"/>
        <end position="64"/>
    </location>
</feature>
<feature type="strand" evidence="2">
    <location>
        <begin position="67"/>
        <end position="72"/>
    </location>
</feature>
<feature type="helix" evidence="2">
    <location>
        <begin position="75"/>
        <end position="79"/>
    </location>
</feature>
<feature type="helix" evidence="2">
    <location>
        <begin position="83"/>
        <end position="97"/>
    </location>
</feature>
<feature type="strand" evidence="2">
    <location>
        <begin position="101"/>
        <end position="103"/>
    </location>
</feature>
<feature type="helix" evidence="2">
    <location>
        <begin position="104"/>
        <end position="114"/>
    </location>
</feature>
<feature type="strand" evidence="2">
    <location>
        <begin position="118"/>
        <end position="126"/>
    </location>
</feature>
<feature type="helix" evidence="2">
    <location>
        <begin position="128"/>
        <end position="140"/>
    </location>
</feature>
<feature type="strand" evidence="2">
    <location>
        <begin position="144"/>
        <end position="150"/>
    </location>
</feature>
<feature type="helix" evidence="2">
    <location>
        <begin position="156"/>
        <end position="160"/>
    </location>
</feature>
<feature type="helix" evidence="2">
    <location>
        <begin position="164"/>
        <end position="176"/>
    </location>
</feature>
<feature type="strand" evidence="2">
    <location>
        <begin position="182"/>
        <end position="187"/>
    </location>
</feature>
<feature type="strand" evidence="1">
    <location>
        <begin position="189"/>
        <end position="191"/>
    </location>
</feature>
<feature type="helix" evidence="2">
    <location>
        <begin position="196"/>
        <end position="204"/>
    </location>
</feature>
<feature type="strand" evidence="2">
    <location>
        <begin position="208"/>
        <end position="210"/>
    </location>
</feature>
<feature type="helix" evidence="2">
    <location>
        <begin position="211"/>
        <end position="222"/>
    </location>
</feature>
<feature type="strand" evidence="2">
    <location>
        <begin position="231"/>
        <end position="233"/>
    </location>
</feature>
<feature type="helix" evidence="2">
    <location>
        <begin position="235"/>
        <end position="238"/>
    </location>
</feature>
<name>AMDA_BORBO</name>
<comment type="catalytic activity">
    <reaction>
        <text>2-aryl-2-methylmalonate + H(+) = 2-arylpropionate + CO2</text>
        <dbReference type="Rhea" id="RHEA:20513"/>
        <dbReference type="ChEBI" id="CHEBI:15378"/>
        <dbReference type="ChEBI" id="CHEBI:16526"/>
        <dbReference type="ChEBI" id="CHEBI:57542"/>
        <dbReference type="ChEBI" id="CHEBI:57738"/>
        <dbReference type="EC" id="4.1.1.76"/>
    </reaction>
</comment>
<reference key="1">
    <citation type="journal article" date="1992" name="Appl. Microbiol. Biotechnol.">
        <title>Cloning and heterologous expression of a novel arylmalonate decarboxylase gene from Alcaligenes bronchisepticus KU 1201.</title>
        <authorList>
            <person name="Miyamoto K."/>
            <person name="Ohta H."/>
        </authorList>
    </citation>
    <scope>NUCLEOTIDE SEQUENCE [GENOMIC DNA]</scope>
    <scope>PROTEIN SEQUENCE OF 1-10</scope>
    <source>
        <strain>KU 1201</strain>
    </source>
</reference>
<evidence type="ECO:0007829" key="1">
    <source>
        <dbReference type="PDB" id="3DTV"/>
    </source>
</evidence>
<evidence type="ECO:0007829" key="2">
    <source>
        <dbReference type="PDB" id="3IXL"/>
    </source>
</evidence>
<sequence length="240" mass="24735">MQQASTPTIGMIVPPAAGLVPADGARLYPDLPFIASGLGLGSVTPEGYDAVIESVVDHARRLQKQGAAVVSLMGTSLSFYRGAAFNAALTVAMREATGLPCTTMSTAVLNGLRALGVRRVALATAYIDDVNERLAAFLAEESLVPTGCRSLGITGVEAMARVDTATLVDLCVRAFEAAPDSDGILLSCGGLLTLDAIPEVERRLGVPVVSSSPAGFWDAVRLAGGGAKARPGYGRLFDES</sequence>
<organism>
    <name type="scientific">Bordetella bronchiseptica</name>
    <name type="common">Alcaligenes bronchisepticus</name>
    <dbReference type="NCBI Taxonomy" id="518"/>
    <lineage>
        <taxon>Bacteria</taxon>
        <taxon>Pseudomonadati</taxon>
        <taxon>Pseudomonadota</taxon>
        <taxon>Betaproteobacteria</taxon>
        <taxon>Burkholderiales</taxon>
        <taxon>Alcaligenaceae</taxon>
        <taxon>Bordetella</taxon>
    </lineage>
</organism>
<protein>
    <recommendedName>
        <fullName>Arylmalonate decarboxylase</fullName>
        <shortName>AMDase</shortName>
        <ecNumber>4.1.1.76</ecNumber>
    </recommendedName>
</protein>
<keyword id="KW-0002">3D-structure</keyword>
<keyword id="KW-0210">Decarboxylase</keyword>
<keyword id="KW-0903">Direct protein sequencing</keyword>
<keyword id="KW-0456">Lyase</keyword>
<dbReference type="EC" id="4.1.1.76"/>
<dbReference type="EMBL" id="S54007">
    <property type="protein sequence ID" value="AAC60426.1"/>
    <property type="molecule type" value="Genomic_DNA"/>
</dbReference>
<dbReference type="EMBL" id="D13116">
    <property type="protein sequence ID" value="BAA02419.1"/>
    <property type="molecule type" value="Genomic_DNA"/>
</dbReference>
<dbReference type="PIR" id="A48374">
    <property type="entry name" value="JS0754"/>
</dbReference>
<dbReference type="PDB" id="2VLB">
    <property type="method" value="X-ray"/>
    <property type="resolution" value="1.92 A"/>
    <property type="chains" value="A/B/C/D=1-240"/>
</dbReference>
<dbReference type="PDB" id="3DG9">
    <property type="method" value="X-ray"/>
    <property type="resolution" value="1.50 A"/>
    <property type="chains" value="A=1-240"/>
</dbReference>
<dbReference type="PDB" id="3DTV">
    <property type="method" value="X-ray"/>
    <property type="resolution" value="2.10 A"/>
    <property type="chains" value="A/B/C/D=1-240"/>
</dbReference>
<dbReference type="PDB" id="3EIS">
    <property type="method" value="X-ray"/>
    <property type="resolution" value="2.10 A"/>
    <property type="chains" value="A/B/C/D=1-240"/>
</dbReference>
<dbReference type="PDB" id="3IP8">
    <property type="method" value="X-ray"/>
    <property type="resolution" value="1.50 A"/>
    <property type="chains" value="A=1-240"/>
</dbReference>
<dbReference type="PDB" id="3IXL">
    <property type="method" value="X-ray"/>
    <property type="resolution" value="1.45 A"/>
    <property type="chains" value="A=1-240"/>
</dbReference>
<dbReference type="PDB" id="3IXM">
    <property type="method" value="X-ray"/>
    <property type="resolution" value="1.90 A"/>
    <property type="chains" value="A=1-240"/>
</dbReference>
<dbReference type="PDBsum" id="2VLB"/>
<dbReference type="PDBsum" id="3DG9"/>
<dbReference type="PDBsum" id="3DTV"/>
<dbReference type="PDBsum" id="3EIS"/>
<dbReference type="PDBsum" id="3IP8"/>
<dbReference type="PDBsum" id="3IXL"/>
<dbReference type="PDBsum" id="3IXM"/>
<dbReference type="SMR" id="Q05115"/>
<dbReference type="KEGG" id="ag:AAC60426"/>
<dbReference type="BRENDA" id="4.1.1.76">
    <property type="organism ID" value="227"/>
</dbReference>
<dbReference type="EvolutionaryTrace" id="Q05115"/>
<dbReference type="GO" id="GO:0047436">
    <property type="term" value="F:arylmalonate decarboxylase activity"/>
    <property type="evidence" value="ECO:0007669"/>
    <property type="project" value="UniProtKB-EC"/>
</dbReference>
<dbReference type="Gene3D" id="3.40.50.12500">
    <property type="match status" value="1"/>
</dbReference>
<dbReference type="InterPro" id="IPR053714">
    <property type="entry name" value="Iso_Racemase_Enz_sf"/>
</dbReference>
<dbReference type="InterPro" id="IPR026286">
    <property type="entry name" value="MaiA/AMDase"/>
</dbReference>
<dbReference type="InterPro" id="IPR011060">
    <property type="entry name" value="RibuloseP-bd_barrel"/>
</dbReference>
<dbReference type="PANTHER" id="PTHR40267">
    <property type="entry name" value="BLR3294 PROTEIN"/>
    <property type="match status" value="1"/>
</dbReference>
<dbReference type="PANTHER" id="PTHR40267:SF1">
    <property type="entry name" value="BLR3294 PROTEIN"/>
    <property type="match status" value="1"/>
</dbReference>
<dbReference type="Pfam" id="PF17645">
    <property type="entry name" value="Amdase"/>
    <property type="match status" value="1"/>
</dbReference>
<dbReference type="PIRSF" id="PIRSF015736">
    <property type="entry name" value="MI"/>
    <property type="match status" value="1"/>
</dbReference>
<dbReference type="SUPFAM" id="SSF51366">
    <property type="entry name" value="Ribulose-phoshate binding barrel"/>
    <property type="match status" value="1"/>
</dbReference>
<accession>Q05115</accession>